<accession>A0JXQ4</accession>
<keyword id="KW-0560">Oxidoreductase</keyword>
<keyword id="KW-1185">Reference proteome</keyword>
<organism>
    <name type="scientific">Arthrobacter sp. (strain FB24)</name>
    <dbReference type="NCBI Taxonomy" id="290399"/>
    <lineage>
        <taxon>Bacteria</taxon>
        <taxon>Bacillati</taxon>
        <taxon>Actinomycetota</taxon>
        <taxon>Actinomycetes</taxon>
        <taxon>Micrococcales</taxon>
        <taxon>Micrococcaceae</taxon>
        <taxon>Arthrobacter</taxon>
    </lineage>
</organism>
<evidence type="ECO:0000255" key="1">
    <source>
        <dbReference type="HAMAP-Rule" id="MF_01401"/>
    </source>
</evidence>
<reference key="1">
    <citation type="journal article" date="2013" name="Stand. Genomic Sci.">
        <title>Complete genome sequence of Arthrobacter sp. strain FB24.</title>
        <authorList>
            <person name="Nakatsu C.H."/>
            <person name="Barabote R."/>
            <person name="Thompson S."/>
            <person name="Bruce D."/>
            <person name="Detter C."/>
            <person name="Brettin T."/>
            <person name="Han C."/>
            <person name="Beasley F."/>
            <person name="Chen W."/>
            <person name="Konopka A."/>
            <person name="Xie G."/>
        </authorList>
    </citation>
    <scope>NUCLEOTIDE SEQUENCE [LARGE SCALE GENOMIC DNA]</scope>
    <source>
        <strain>FB24</strain>
    </source>
</reference>
<sequence>MKTFVLGGGCFWCLDAVYQKTKGVTSVISGYTGGHDRHPDYYSVCSGTTGHAEVVAVSFEEDVIPAEVILDMFFALHDPTTLNRQGYDVGTQYRSSMFYETTEEKILFEEAIERNQALWAHPIVTEVSRLPVFHVAEDFHQDYYAKHPEQGYCQVIINPKLAKARKYYSAWLNA</sequence>
<feature type="chain" id="PRO_1000068308" description="Peptide methionine sulfoxide reductase MsrA">
    <location>
        <begin position="1"/>
        <end position="174"/>
    </location>
</feature>
<feature type="active site" evidence="1">
    <location>
        <position position="10"/>
    </location>
</feature>
<comment type="function">
    <text evidence="1">Has an important function as a repair enzyme for proteins that have been inactivated by oxidation. Catalyzes the reversible oxidation-reduction of methionine sulfoxide in proteins to methionine.</text>
</comment>
<comment type="catalytic activity">
    <reaction evidence="1">
        <text>L-methionyl-[protein] + [thioredoxin]-disulfide + H2O = L-methionyl-(S)-S-oxide-[protein] + [thioredoxin]-dithiol</text>
        <dbReference type="Rhea" id="RHEA:14217"/>
        <dbReference type="Rhea" id="RHEA-COMP:10698"/>
        <dbReference type="Rhea" id="RHEA-COMP:10700"/>
        <dbReference type="Rhea" id="RHEA-COMP:12313"/>
        <dbReference type="Rhea" id="RHEA-COMP:12315"/>
        <dbReference type="ChEBI" id="CHEBI:15377"/>
        <dbReference type="ChEBI" id="CHEBI:16044"/>
        <dbReference type="ChEBI" id="CHEBI:29950"/>
        <dbReference type="ChEBI" id="CHEBI:44120"/>
        <dbReference type="ChEBI" id="CHEBI:50058"/>
        <dbReference type="EC" id="1.8.4.11"/>
    </reaction>
</comment>
<comment type="catalytic activity">
    <reaction evidence="1">
        <text>[thioredoxin]-disulfide + L-methionine + H2O = L-methionine (S)-S-oxide + [thioredoxin]-dithiol</text>
        <dbReference type="Rhea" id="RHEA:19993"/>
        <dbReference type="Rhea" id="RHEA-COMP:10698"/>
        <dbReference type="Rhea" id="RHEA-COMP:10700"/>
        <dbReference type="ChEBI" id="CHEBI:15377"/>
        <dbReference type="ChEBI" id="CHEBI:29950"/>
        <dbReference type="ChEBI" id="CHEBI:50058"/>
        <dbReference type="ChEBI" id="CHEBI:57844"/>
        <dbReference type="ChEBI" id="CHEBI:58772"/>
        <dbReference type="EC" id="1.8.4.11"/>
    </reaction>
</comment>
<comment type="similarity">
    <text evidence="1">Belongs to the MsrA Met sulfoxide reductase family.</text>
</comment>
<dbReference type="EC" id="1.8.4.11" evidence="1"/>
<dbReference type="EMBL" id="CP000454">
    <property type="protein sequence ID" value="ABK03824.1"/>
    <property type="molecule type" value="Genomic_DNA"/>
</dbReference>
<dbReference type="RefSeq" id="WP_011692287.1">
    <property type="nucleotide sequence ID" value="NC_008541.1"/>
</dbReference>
<dbReference type="SMR" id="A0JXQ4"/>
<dbReference type="STRING" id="290399.Arth_2445"/>
<dbReference type="KEGG" id="art:Arth_2445"/>
<dbReference type="eggNOG" id="COG0225">
    <property type="taxonomic scope" value="Bacteria"/>
</dbReference>
<dbReference type="HOGENOM" id="CLU_031040_10_0_11"/>
<dbReference type="OrthoDB" id="4174719at2"/>
<dbReference type="Proteomes" id="UP000000754">
    <property type="component" value="Chromosome"/>
</dbReference>
<dbReference type="GO" id="GO:0033744">
    <property type="term" value="F:L-methionine:thioredoxin-disulfide S-oxidoreductase activity"/>
    <property type="evidence" value="ECO:0007669"/>
    <property type="project" value="RHEA"/>
</dbReference>
<dbReference type="GO" id="GO:0008113">
    <property type="term" value="F:peptide-methionine (S)-S-oxide reductase activity"/>
    <property type="evidence" value="ECO:0007669"/>
    <property type="project" value="UniProtKB-UniRule"/>
</dbReference>
<dbReference type="GO" id="GO:0036211">
    <property type="term" value="P:protein modification process"/>
    <property type="evidence" value="ECO:0007669"/>
    <property type="project" value="UniProtKB-UniRule"/>
</dbReference>
<dbReference type="Gene3D" id="3.30.1060.10">
    <property type="entry name" value="Peptide methionine sulphoxide reductase MsrA"/>
    <property type="match status" value="1"/>
</dbReference>
<dbReference type="HAMAP" id="MF_01401">
    <property type="entry name" value="MsrA"/>
    <property type="match status" value="1"/>
</dbReference>
<dbReference type="InterPro" id="IPR002569">
    <property type="entry name" value="Met_Sox_Rdtase_MsrA_dom"/>
</dbReference>
<dbReference type="InterPro" id="IPR036509">
    <property type="entry name" value="Met_Sox_Rdtase_MsrA_sf"/>
</dbReference>
<dbReference type="NCBIfam" id="TIGR00401">
    <property type="entry name" value="msrA"/>
    <property type="match status" value="1"/>
</dbReference>
<dbReference type="PANTHER" id="PTHR43774">
    <property type="entry name" value="PEPTIDE METHIONINE SULFOXIDE REDUCTASE"/>
    <property type="match status" value="1"/>
</dbReference>
<dbReference type="PANTHER" id="PTHR43774:SF1">
    <property type="entry name" value="PEPTIDE METHIONINE SULFOXIDE REDUCTASE MSRA 2"/>
    <property type="match status" value="1"/>
</dbReference>
<dbReference type="Pfam" id="PF01625">
    <property type="entry name" value="PMSR"/>
    <property type="match status" value="1"/>
</dbReference>
<dbReference type="SUPFAM" id="SSF55068">
    <property type="entry name" value="Peptide methionine sulfoxide reductase"/>
    <property type="match status" value="1"/>
</dbReference>
<gene>
    <name evidence="1" type="primary">msrA</name>
    <name type="ordered locus">Arth_2445</name>
</gene>
<protein>
    <recommendedName>
        <fullName evidence="1">Peptide methionine sulfoxide reductase MsrA</fullName>
        <shortName evidence="1">Protein-methionine-S-oxide reductase</shortName>
        <ecNumber evidence="1">1.8.4.11</ecNumber>
    </recommendedName>
    <alternativeName>
        <fullName evidence="1">Peptide-methionine (S)-S-oxide reductase</fullName>
        <shortName evidence="1">Peptide Met(O) reductase</shortName>
    </alternativeName>
</protein>
<name>MSRA_ARTS2</name>
<proteinExistence type="inferred from homology"/>